<gene>
    <name evidence="1" type="primary">pfkA</name>
    <name type="ordered locus">SUB1001</name>
</gene>
<evidence type="ECO:0000255" key="1">
    <source>
        <dbReference type="HAMAP-Rule" id="MF_00339"/>
    </source>
</evidence>
<proteinExistence type="inferred from homology"/>
<protein>
    <recommendedName>
        <fullName evidence="1">ATP-dependent 6-phosphofructokinase</fullName>
        <shortName evidence="1">ATP-PFK</shortName>
        <shortName evidence="1">Phosphofructokinase</shortName>
        <ecNumber evidence="1">2.7.1.11</ecNumber>
    </recommendedName>
    <alternativeName>
        <fullName evidence="1">Phosphohexokinase</fullName>
    </alternativeName>
</protein>
<dbReference type="EC" id="2.7.1.11" evidence="1"/>
<dbReference type="EMBL" id="AM946015">
    <property type="protein sequence ID" value="CAR42233.1"/>
    <property type="molecule type" value="Genomic_DNA"/>
</dbReference>
<dbReference type="RefSeq" id="WP_012658499.1">
    <property type="nucleotide sequence ID" value="NC_012004.1"/>
</dbReference>
<dbReference type="SMR" id="B9DSA4"/>
<dbReference type="STRING" id="218495.SUB1001"/>
<dbReference type="GeneID" id="93826275"/>
<dbReference type="KEGG" id="sub:SUB1001"/>
<dbReference type="eggNOG" id="COG0205">
    <property type="taxonomic scope" value="Bacteria"/>
</dbReference>
<dbReference type="HOGENOM" id="CLU_020655_0_1_9"/>
<dbReference type="OrthoDB" id="9802503at2"/>
<dbReference type="UniPathway" id="UPA00109">
    <property type="reaction ID" value="UER00182"/>
</dbReference>
<dbReference type="Proteomes" id="UP000000449">
    <property type="component" value="Chromosome"/>
</dbReference>
<dbReference type="GO" id="GO:0005945">
    <property type="term" value="C:6-phosphofructokinase complex"/>
    <property type="evidence" value="ECO:0007669"/>
    <property type="project" value="TreeGrafter"/>
</dbReference>
<dbReference type="GO" id="GO:0003872">
    <property type="term" value="F:6-phosphofructokinase activity"/>
    <property type="evidence" value="ECO:0007669"/>
    <property type="project" value="UniProtKB-UniRule"/>
</dbReference>
<dbReference type="GO" id="GO:0016208">
    <property type="term" value="F:AMP binding"/>
    <property type="evidence" value="ECO:0007669"/>
    <property type="project" value="TreeGrafter"/>
</dbReference>
<dbReference type="GO" id="GO:0005524">
    <property type="term" value="F:ATP binding"/>
    <property type="evidence" value="ECO:0007669"/>
    <property type="project" value="UniProtKB-KW"/>
</dbReference>
<dbReference type="GO" id="GO:0070095">
    <property type="term" value="F:fructose-6-phosphate binding"/>
    <property type="evidence" value="ECO:0007669"/>
    <property type="project" value="TreeGrafter"/>
</dbReference>
<dbReference type="GO" id="GO:0042802">
    <property type="term" value="F:identical protein binding"/>
    <property type="evidence" value="ECO:0007669"/>
    <property type="project" value="TreeGrafter"/>
</dbReference>
<dbReference type="GO" id="GO:0046872">
    <property type="term" value="F:metal ion binding"/>
    <property type="evidence" value="ECO:0007669"/>
    <property type="project" value="UniProtKB-KW"/>
</dbReference>
<dbReference type="GO" id="GO:0048029">
    <property type="term" value="F:monosaccharide binding"/>
    <property type="evidence" value="ECO:0007669"/>
    <property type="project" value="TreeGrafter"/>
</dbReference>
<dbReference type="GO" id="GO:0061621">
    <property type="term" value="P:canonical glycolysis"/>
    <property type="evidence" value="ECO:0007669"/>
    <property type="project" value="TreeGrafter"/>
</dbReference>
<dbReference type="GO" id="GO:0030388">
    <property type="term" value="P:fructose 1,6-bisphosphate metabolic process"/>
    <property type="evidence" value="ECO:0007669"/>
    <property type="project" value="TreeGrafter"/>
</dbReference>
<dbReference type="GO" id="GO:0006002">
    <property type="term" value="P:fructose 6-phosphate metabolic process"/>
    <property type="evidence" value="ECO:0007669"/>
    <property type="project" value="InterPro"/>
</dbReference>
<dbReference type="FunFam" id="3.40.50.450:FF:000001">
    <property type="entry name" value="ATP-dependent 6-phosphofructokinase"/>
    <property type="match status" value="1"/>
</dbReference>
<dbReference type="FunFam" id="3.40.50.460:FF:000002">
    <property type="entry name" value="ATP-dependent 6-phosphofructokinase"/>
    <property type="match status" value="1"/>
</dbReference>
<dbReference type="Gene3D" id="3.40.50.450">
    <property type="match status" value="1"/>
</dbReference>
<dbReference type="Gene3D" id="3.40.50.460">
    <property type="entry name" value="Phosphofructokinase domain"/>
    <property type="match status" value="1"/>
</dbReference>
<dbReference type="HAMAP" id="MF_00339">
    <property type="entry name" value="Phosphofructokinase_I_B1"/>
    <property type="match status" value="1"/>
</dbReference>
<dbReference type="InterPro" id="IPR022953">
    <property type="entry name" value="ATP_PFK"/>
</dbReference>
<dbReference type="InterPro" id="IPR012003">
    <property type="entry name" value="ATP_PFK_prok-type"/>
</dbReference>
<dbReference type="InterPro" id="IPR012828">
    <property type="entry name" value="PFKA_ATP_prok"/>
</dbReference>
<dbReference type="InterPro" id="IPR015912">
    <property type="entry name" value="Phosphofructokinase_CS"/>
</dbReference>
<dbReference type="InterPro" id="IPR000023">
    <property type="entry name" value="Phosphofructokinase_dom"/>
</dbReference>
<dbReference type="InterPro" id="IPR035966">
    <property type="entry name" value="PKF_sf"/>
</dbReference>
<dbReference type="NCBIfam" id="TIGR02482">
    <property type="entry name" value="PFKA_ATP"/>
    <property type="match status" value="1"/>
</dbReference>
<dbReference type="NCBIfam" id="NF002872">
    <property type="entry name" value="PRK03202.1"/>
    <property type="match status" value="1"/>
</dbReference>
<dbReference type="PANTHER" id="PTHR13697:SF4">
    <property type="entry name" value="ATP-DEPENDENT 6-PHOSPHOFRUCTOKINASE"/>
    <property type="match status" value="1"/>
</dbReference>
<dbReference type="PANTHER" id="PTHR13697">
    <property type="entry name" value="PHOSPHOFRUCTOKINASE"/>
    <property type="match status" value="1"/>
</dbReference>
<dbReference type="Pfam" id="PF00365">
    <property type="entry name" value="PFK"/>
    <property type="match status" value="1"/>
</dbReference>
<dbReference type="PIRSF" id="PIRSF000532">
    <property type="entry name" value="ATP_PFK_prok"/>
    <property type="match status" value="1"/>
</dbReference>
<dbReference type="PRINTS" id="PR00476">
    <property type="entry name" value="PHFRCTKINASE"/>
</dbReference>
<dbReference type="SUPFAM" id="SSF53784">
    <property type="entry name" value="Phosphofructokinase"/>
    <property type="match status" value="1"/>
</dbReference>
<dbReference type="PROSITE" id="PS00433">
    <property type="entry name" value="PHOSPHOFRUCTOKINASE"/>
    <property type="match status" value="1"/>
</dbReference>
<name>PFKA_STRU0</name>
<sequence>MKRIAVLTSGGDAPGMNAAIRAVVRKAISEGMEVYGVNHGYAGLVAGDIFPISSKGVGDKISRGGTFLYSARYPEFANLEGQLAGIEQLKKHGIEGVVVIGGDGSYHGAMRLTEHGFPAVGIPGTIDNDIAGTDYTIGFDTAVNTAVEAIDKLRDTSSSHGRTFVVEVMGRNAGDIALWAGIASGADQIIVPEEEFNIQQVVKTIDDDFKKQGKNHHIIVLAEGVMSGDQFAQELKAAGNTSDLRVTNLGHILRGGSPTARDRVIASWMGSHAVELLKQGKGGFAVGIHNEELVESPILGSAEEGALFSLGEDGKIIVNNPHRARLDFAKLNRSLSR</sequence>
<keyword id="KW-0021">Allosteric enzyme</keyword>
<keyword id="KW-0067">ATP-binding</keyword>
<keyword id="KW-0963">Cytoplasm</keyword>
<keyword id="KW-0324">Glycolysis</keyword>
<keyword id="KW-0418">Kinase</keyword>
<keyword id="KW-0460">Magnesium</keyword>
<keyword id="KW-0479">Metal-binding</keyword>
<keyword id="KW-0547">Nucleotide-binding</keyword>
<keyword id="KW-1185">Reference proteome</keyword>
<keyword id="KW-0808">Transferase</keyword>
<feature type="chain" id="PRO_1000192384" description="ATP-dependent 6-phosphofructokinase">
    <location>
        <begin position="1"/>
        <end position="337"/>
    </location>
</feature>
<feature type="active site" description="Proton acceptor" evidence="1">
    <location>
        <position position="127"/>
    </location>
</feature>
<feature type="binding site" evidence="1">
    <location>
        <position position="11"/>
    </location>
    <ligand>
        <name>ATP</name>
        <dbReference type="ChEBI" id="CHEBI:30616"/>
    </ligand>
</feature>
<feature type="binding site" evidence="1">
    <location>
        <begin position="21"/>
        <end position="25"/>
    </location>
    <ligand>
        <name>ADP</name>
        <dbReference type="ChEBI" id="CHEBI:456216"/>
        <note>allosteric activator; ligand shared between dimeric partners</note>
    </ligand>
</feature>
<feature type="binding site" evidence="1">
    <location>
        <begin position="72"/>
        <end position="73"/>
    </location>
    <ligand>
        <name>ATP</name>
        <dbReference type="ChEBI" id="CHEBI:30616"/>
    </ligand>
</feature>
<feature type="binding site" evidence="1">
    <location>
        <begin position="102"/>
        <end position="105"/>
    </location>
    <ligand>
        <name>ATP</name>
        <dbReference type="ChEBI" id="CHEBI:30616"/>
    </ligand>
</feature>
<feature type="binding site" evidence="1">
    <location>
        <position position="103"/>
    </location>
    <ligand>
        <name>Mg(2+)</name>
        <dbReference type="ChEBI" id="CHEBI:18420"/>
        <note>catalytic</note>
    </ligand>
</feature>
<feature type="binding site" description="in other chain" evidence="1">
    <location>
        <begin position="125"/>
        <end position="127"/>
    </location>
    <ligand>
        <name>substrate</name>
        <note>ligand shared between dimeric partners</note>
    </ligand>
</feature>
<feature type="binding site" description="in other chain" evidence="1">
    <location>
        <position position="154"/>
    </location>
    <ligand>
        <name>ADP</name>
        <dbReference type="ChEBI" id="CHEBI:456216"/>
        <note>allosteric activator; ligand shared between dimeric partners</note>
    </ligand>
</feature>
<feature type="binding site" evidence="1">
    <location>
        <position position="162"/>
    </location>
    <ligand>
        <name>substrate</name>
        <note>ligand shared between dimeric partners</note>
    </ligand>
</feature>
<feature type="binding site" description="in other chain" evidence="1">
    <location>
        <begin position="169"/>
        <end position="171"/>
    </location>
    <ligand>
        <name>substrate</name>
        <note>ligand shared between dimeric partners</note>
    </ligand>
</feature>
<feature type="binding site" description="in other chain" evidence="1">
    <location>
        <begin position="185"/>
        <end position="187"/>
    </location>
    <ligand>
        <name>ADP</name>
        <dbReference type="ChEBI" id="CHEBI:456216"/>
        <note>allosteric activator; ligand shared between dimeric partners</note>
    </ligand>
</feature>
<feature type="binding site" description="in other chain" evidence="1">
    <location>
        <begin position="214"/>
        <end position="216"/>
    </location>
    <ligand>
        <name>ADP</name>
        <dbReference type="ChEBI" id="CHEBI:456216"/>
        <note>allosteric activator; ligand shared between dimeric partners</note>
    </ligand>
</feature>
<feature type="binding site" description="in other chain" evidence="1">
    <location>
        <position position="223"/>
    </location>
    <ligand>
        <name>substrate</name>
        <note>ligand shared between dimeric partners</note>
    </ligand>
</feature>
<feature type="binding site" evidence="1">
    <location>
        <position position="245"/>
    </location>
    <ligand>
        <name>substrate</name>
        <note>ligand shared between dimeric partners</note>
    </ligand>
</feature>
<feature type="binding site" description="in other chain" evidence="1">
    <location>
        <begin position="251"/>
        <end position="254"/>
    </location>
    <ligand>
        <name>substrate</name>
        <note>ligand shared between dimeric partners</note>
    </ligand>
</feature>
<reference key="1">
    <citation type="journal article" date="2009" name="BMC Genomics">
        <title>Evidence for niche adaptation in the genome of the bovine pathogen Streptococcus uberis.</title>
        <authorList>
            <person name="Ward P.N."/>
            <person name="Holden M.T.G."/>
            <person name="Leigh J.A."/>
            <person name="Lennard N."/>
            <person name="Bignell A."/>
            <person name="Barron A."/>
            <person name="Clark L."/>
            <person name="Quail M.A."/>
            <person name="Woodward J."/>
            <person name="Barrell B.G."/>
            <person name="Egan S.A."/>
            <person name="Field T.R."/>
            <person name="Maskell D."/>
            <person name="Kehoe M."/>
            <person name="Dowson C.G."/>
            <person name="Chanter N."/>
            <person name="Whatmore A.M."/>
            <person name="Bentley S.D."/>
            <person name="Parkhill J."/>
        </authorList>
    </citation>
    <scope>NUCLEOTIDE SEQUENCE [LARGE SCALE GENOMIC DNA]</scope>
    <source>
        <strain>ATCC BAA-854 / 0140J</strain>
    </source>
</reference>
<organism>
    <name type="scientific">Streptococcus uberis (strain ATCC BAA-854 / 0140J)</name>
    <dbReference type="NCBI Taxonomy" id="218495"/>
    <lineage>
        <taxon>Bacteria</taxon>
        <taxon>Bacillati</taxon>
        <taxon>Bacillota</taxon>
        <taxon>Bacilli</taxon>
        <taxon>Lactobacillales</taxon>
        <taxon>Streptococcaceae</taxon>
        <taxon>Streptococcus</taxon>
    </lineage>
</organism>
<accession>B9DSA4</accession>
<comment type="function">
    <text evidence="1">Catalyzes the phosphorylation of D-fructose 6-phosphate to fructose 1,6-bisphosphate by ATP, the first committing step of glycolysis.</text>
</comment>
<comment type="catalytic activity">
    <reaction evidence="1">
        <text>beta-D-fructose 6-phosphate + ATP = beta-D-fructose 1,6-bisphosphate + ADP + H(+)</text>
        <dbReference type="Rhea" id="RHEA:16109"/>
        <dbReference type="ChEBI" id="CHEBI:15378"/>
        <dbReference type="ChEBI" id="CHEBI:30616"/>
        <dbReference type="ChEBI" id="CHEBI:32966"/>
        <dbReference type="ChEBI" id="CHEBI:57634"/>
        <dbReference type="ChEBI" id="CHEBI:456216"/>
        <dbReference type="EC" id="2.7.1.11"/>
    </reaction>
</comment>
<comment type="cofactor">
    <cofactor evidence="1">
        <name>Mg(2+)</name>
        <dbReference type="ChEBI" id="CHEBI:18420"/>
    </cofactor>
</comment>
<comment type="activity regulation">
    <text evidence="1">Allosterically activated by ADP and other diphosphonucleosides, and allosterically inhibited by phosphoenolpyruvate.</text>
</comment>
<comment type="pathway">
    <text evidence="1">Carbohydrate degradation; glycolysis; D-glyceraldehyde 3-phosphate and glycerone phosphate from D-glucose: step 3/4.</text>
</comment>
<comment type="subunit">
    <text evidence="1">Homotetramer.</text>
</comment>
<comment type="subcellular location">
    <subcellularLocation>
        <location evidence="1">Cytoplasm</location>
    </subcellularLocation>
</comment>
<comment type="similarity">
    <text evidence="1">Belongs to the phosphofructokinase type A (PFKA) family. ATP-dependent PFK group I subfamily. Prokaryotic clade 'B1' sub-subfamily.</text>
</comment>